<evidence type="ECO:0000250" key="1"/>
<evidence type="ECO:0000255" key="2"/>
<evidence type="ECO:0000255" key="3">
    <source>
        <dbReference type="HAMAP-Rule" id="MF_04090"/>
    </source>
</evidence>
<evidence type="ECO:0000255" key="4">
    <source>
        <dbReference type="PROSITE-ProRule" id="PRU00266"/>
    </source>
</evidence>
<organismHost>
    <name type="scientific">Bos taurus</name>
    <name type="common">Bovine</name>
    <dbReference type="NCBI Taxonomy" id="9913"/>
</organismHost>
<accession>P34717</accession>
<name>NSP3_ROTBS</name>
<reference key="1">
    <citation type="journal article" date="1993" name="Nucleic Acids Res.">
        <title>Nucleotide sequences of genes 6 and 10 of a bovine group C rotavirus.</title>
        <authorList>
            <person name="Jiang B."/>
            <person name="Tsunemitsu H."/>
            <person name="Gentsch J.R."/>
            <person name="Saif L.J."/>
            <person name="Glass R.I."/>
        </authorList>
    </citation>
    <scope>NUCLEOTIDE SEQUENCE [GENOMIC RNA]</scope>
</reference>
<comment type="function">
    <text evidence="3">May play a role in stimulating the translation of viral mRNAs.</text>
</comment>
<comment type="subcellular location">
    <subcellularLocation>
        <location evidence="3">Host cytoplasm</location>
    </subcellularLocation>
</comment>
<comment type="similarity">
    <text evidence="3">Belongs to the rotavirus NSP3 family.</text>
</comment>
<protein>
    <recommendedName>
        <fullName evidence="3">Non-structural protein 3</fullName>
        <shortName evidence="3">NSP3</shortName>
    </recommendedName>
    <alternativeName>
        <fullName evidence="3">NCVP4</fullName>
    </alternativeName>
    <alternativeName>
        <fullName evidence="3">Non-structural RNA-binding protein 34</fullName>
        <shortName evidence="3">NS34</shortName>
    </alternativeName>
    <component>
        <recommendedName>
            <fullName>p38</fullName>
        </recommendedName>
    </component>
    <component>
        <recommendedName>
            <fullName>p8</fullName>
        </recommendedName>
    </component>
</protein>
<dbReference type="EMBL" id="L12390">
    <property type="status" value="NOT_ANNOTATED_CDS"/>
    <property type="molecule type" value="Genomic_RNA"/>
</dbReference>
<dbReference type="PIR" id="S35639">
    <property type="entry name" value="S35639"/>
</dbReference>
<dbReference type="SMR" id="P34717"/>
<dbReference type="GO" id="GO:0030430">
    <property type="term" value="C:host cell cytoplasm"/>
    <property type="evidence" value="ECO:0007669"/>
    <property type="project" value="UniProtKB-SubCell"/>
</dbReference>
<dbReference type="GO" id="GO:0003723">
    <property type="term" value="F:RNA binding"/>
    <property type="evidence" value="ECO:0007669"/>
    <property type="project" value="UniProtKB-UniRule"/>
</dbReference>
<dbReference type="GO" id="GO:0006417">
    <property type="term" value="P:regulation of translation"/>
    <property type="evidence" value="ECO:0007669"/>
    <property type="project" value="UniProtKB-UniRule"/>
</dbReference>
<dbReference type="CDD" id="cd20714">
    <property type="entry name" value="NSP3_rotavirus"/>
    <property type="match status" value="1"/>
</dbReference>
<dbReference type="Gene3D" id="3.30.160.20">
    <property type="match status" value="1"/>
</dbReference>
<dbReference type="Gene3D" id="3.30.70.1610">
    <property type="match status" value="1"/>
</dbReference>
<dbReference type="Gene3D" id="6.10.280.20">
    <property type="entry name" value="Rotavirus non-structural protein NSP3, N-terminal domain"/>
    <property type="match status" value="1"/>
</dbReference>
<dbReference type="HAMAP" id="MF_04090">
    <property type="entry name" value="ROTA_NSP3"/>
    <property type="match status" value="1"/>
</dbReference>
<dbReference type="InterPro" id="IPR014720">
    <property type="entry name" value="dsRBD_dom"/>
</dbReference>
<dbReference type="InterPro" id="IPR042519">
    <property type="entry name" value="NSP3_N_rotavirus"/>
</dbReference>
<dbReference type="InterPro" id="IPR036082">
    <property type="entry name" value="NSP3_sf"/>
</dbReference>
<dbReference type="InterPro" id="IPR002873">
    <property type="entry name" value="Rotavirus_NSP3"/>
</dbReference>
<dbReference type="Pfam" id="PF01665">
    <property type="entry name" value="Rota_NSP3"/>
    <property type="match status" value="1"/>
</dbReference>
<dbReference type="SMART" id="SM00358">
    <property type="entry name" value="DSRM"/>
    <property type="match status" value="1"/>
</dbReference>
<dbReference type="SUPFAM" id="SSF54768">
    <property type="entry name" value="dsRNA-binding domain-like"/>
    <property type="match status" value="1"/>
</dbReference>
<dbReference type="SUPFAM" id="SSF69903">
    <property type="entry name" value="NSP3 homodimer"/>
    <property type="match status" value="1"/>
</dbReference>
<dbReference type="PROSITE" id="PS50137">
    <property type="entry name" value="DS_RBD"/>
    <property type="match status" value="1"/>
</dbReference>
<proteinExistence type="inferred from homology"/>
<keyword id="KW-0175">Coiled coil</keyword>
<keyword id="KW-1035">Host cytoplasm</keyword>
<keyword id="KW-0694">RNA-binding</keyword>
<keyword id="KW-0810">Translation regulation</keyword>
<sequence>MATQASVEWIFNVAGSAASASLAKSIKDAGGSEDFAKYVVARFYDNYKDSIDDSGIYNACMGRARTVDKALNDSRLAERNEEWHTNLATIRRLDLELAELKLMLSNLGMKREERVLNSMFSVTREEGRSSNVVMLKQNAVKMIEEGKLKIKVEKNENYTESLKNKIEELECIIGAFEKGKEINIALDAMTGEVRLDGDSCSYNSTAAFVSTIMGTPIKMYDESNKPLFDVGKYINPKHVIDKMIESEIPIFKSDYRNNESPDFDAWNENSNLKIVSVNDCHAICVFKFENEWWCFDDGRLRKYNGIGNPLIVANSKFQIDRILISGDIELNPGPNALVKLNDCITKYNLKIICTFDVNLDDDGSIMYICYLKVGSAEATGNGCSKKEAKRRAAVSILDQLGM</sequence>
<organism>
    <name type="scientific">Rotavirus C (isolate RVC/Cow/Japan/Shintoku/1991/G2P[3])</name>
    <name type="common">RV-C</name>
    <dbReference type="NCBI Taxonomy" id="33723"/>
    <lineage>
        <taxon>Viruses</taxon>
        <taxon>Riboviria</taxon>
        <taxon>Orthornavirae</taxon>
        <taxon>Duplornaviricota</taxon>
        <taxon>Resentoviricetes</taxon>
        <taxon>Reovirales</taxon>
        <taxon>Sedoreoviridae</taxon>
        <taxon>Rotavirus</taxon>
        <taxon>Rotavirus C</taxon>
    </lineage>
</organism>
<feature type="chain" id="PRO_0000149543" description="Non-structural protein 3">
    <location>
        <begin position="1"/>
        <end position="402"/>
    </location>
</feature>
<feature type="chain" id="PRO_0000369883" description="p38" evidence="1">
    <location>
        <begin position="1"/>
        <end position="333"/>
    </location>
</feature>
<feature type="chain" id="PRO_0000369884" description="p8" evidence="1">
    <location>
        <begin position="334"/>
        <end position="402"/>
    </location>
</feature>
<feature type="domain" description="DRBM" evidence="4">
    <location>
        <begin position="334"/>
        <end position="402"/>
    </location>
</feature>
<feature type="coiled-coil region" evidence="2">
    <location>
        <begin position="87"/>
        <end position="113"/>
    </location>
</feature>
<feature type="coiled-coil region" evidence="2">
    <location>
        <begin position="147"/>
        <end position="181"/>
    </location>
</feature>
<feature type="site" description="Cleavage; by autolysis" evidence="2">
    <location>
        <begin position="333"/>
        <end position="334"/>
    </location>
</feature>